<keyword id="KW-1185">Reference proteome</keyword>
<keyword id="KW-0687">Ribonucleoprotein</keyword>
<keyword id="KW-0689">Ribosomal protein</keyword>
<keyword id="KW-0694">RNA-binding</keyword>
<keyword id="KW-0699">rRNA-binding</keyword>
<name>RL10_RALN1</name>
<feature type="chain" id="PRO_0000154693" description="Large ribosomal subunit protein uL10">
    <location>
        <begin position="1"/>
        <end position="168"/>
    </location>
</feature>
<dbReference type="EMBL" id="AL646052">
    <property type="protein sequence ID" value="CAD16745.1"/>
    <property type="molecule type" value="Genomic_DNA"/>
</dbReference>
<dbReference type="RefSeq" id="WP_011002931.1">
    <property type="nucleotide sequence ID" value="NC_003295.1"/>
</dbReference>
<dbReference type="SMR" id="Q8XUZ6"/>
<dbReference type="STRING" id="267608.RSc3036"/>
<dbReference type="EnsemblBacteria" id="CAD16745">
    <property type="protein sequence ID" value="CAD16745"/>
    <property type="gene ID" value="RSc3036"/>
</dbReference>
<dbReference type="GeneID" id="93851162"/>
<dbReference type="KEGG" id="rso:RSc3036"/>
<dbReference type="eggNOG" id="COG0244">
    <property type="taxonomic scope" value="Bacteria"/>
</dbReference>
<dbReference type="HOGENOM" id="CLU_092227_0_0_4"/>
<dbReference type="Proteomes" id="UP000001436">
    <property type="component" value="Chromosome"/>
</dbReference>
<dbReference type="GO" id="GO:0015934">
    <property type="term" value="C:large ribosomal subunit"/>
    <property type="evidence" value="ECO:0007669"/>
    <property type="project" value="InterPro"/>
</dbReference>
<dbReference type="GO" id="GO:0070180">
    <property type="term" value="F:large ribosomal subunit rRNA binding"/>
    <property type="evidence" value="ECO:0007669"/>
    <property type="project" value="UniProtKB-UniRule"/>
</dbReference>
<dbReference type="GO" id="GO:0003735">
    <property type="term" value="F:structural constituent of ribosome"/>
    <property type="evidence" value="ECO:0007669"/>
    <property type="project" value="InterPro"/>
</dbReference>
<dbReference type="GO" id="GO:0006412">
    <property type="term" value="P:translation"/>
    <property type="evidence" value="ECO:0007669"/>
    <property type="project" value="UniProtKB-UniRule"/>
</dbReference>
<dbReference type="CDD" id="cd05797">
    <property type="entry name" value="Ribosomal_L10"/>
    <property type="match status" value="1"/>
</dbReference>
<dbReference type="Gene3D" id="3.30.70.1730">
    <property type="match status" value="1"/>
</dbReference>
<dbReference type="Gene3D" id="6.10.250.290">
    <property type="match status" value="1"/>
</dbReference>
<dbReference type="HAMAP" id="MF_00362">
    <property type="entry name" value="Ribosomal_uL10"/>
    <property type="match status" value="1"/>
</dbReference>
<dbReference type="InterPro" id="IPR001790">
    <property type="entry name" value="Ribosomal_uL10"/>
</dbReference>
<dbReference type="InterPro" id="IPR043141">
    <property type="entry name" value="Ribosomal_uL10-like_sf"/>
</dbReference>
<dbReference type="InterPro" id="IPR022973">
    <property type="entry name" value="Ribosomal_uL10_bac"/>
</dbReference>
<dbReference type="InterPro" id="IPR047865">
    <property type="entry name" value="Ribosomal_uL10_bac_type"/>
</dbReference>
<dbReference type="InterPro" id="IPR002363">
    <property type="entry name" value="Ribosomal_uL10_CS_bac"/>
</dbReference>
<dbReference type="NCBIfam" id="NF000955">
    <property type="entry name" value="PRK00099.1-1"/>
    <property type="match status" value="1"/>
</dbReference>
<dbReference type="PANTHER" id="PTHR11560">
    <property type="entry name" value="39S RIBOSOMAL PROTEIN L10, MITOCHONDRIAL"/>
    <property type="match status" value="1"/>
</dbReference>
<dbReference type="Pfam" id="PF00466">
    <property type="entry name" value="Ribosomal_L10"/>
    <property type="match status" value="1"/>
</dbReference>
<dbReference type="SUPFAM" id="SSF160369">
    <property type="entry name" value="Ribosomal protein L10-like"/>
    <property type="match status" value="1"/>
</dbReference>
<dbReference type="PROSITE" id="PS01109">
    <property type="entry name" value="RIBOSOMAL_L10"/>
    <property type="match status" value="1"/>
</dbReference>
<gene>
    <name evidence="1" type="primary">rplJ</name>
    <name type="ordered locus">RSc3036</name>
    <name type="ORF">RS04721</name>
</gene>
<sequence length="168" mass="17740">MALNLEDKKAVVAEVTAQVAKASTIVVAEYRGITVGDLTKLRAQARQQGVYLRVLKNTLARRAVEGTPFAELAEQMTGPLIYGISEDAVAPAKVLNDFAKGNDKLVLRAGSYEGKVLDAAGVKALASIPSREELLSKLLFVMQAPVSGFARALAALAEKKQSEEGAAA</sequence>
<evidence type="ECO:0000255" key="1">
    <source>
        <dbReference type="HAMAP-Rule" id="MF_00362"/>
    </source>
</evidence>
<evidence type="ECO:0000305" key="2"/>
<accession>Q8XUZ6</accession>
<comment type="function">
    <text evidence="1">Forms part of the ribosomal stalk, playing a central role in the interaction of the ribosome with GTP-bound translation factors.</text>
</comment>
<comment type="subunit">
    <text evidence="1">Part of the ribosomal stalk of the 50S ribosomal subunit. The N-terminus interacts with L11 and the large rRNA to form the base of the stalk. The C-terminus forms an elongated spine to which L12 dimers bind in a sequential fashion forming a multimeric L10(L12)X complex.</text>
</comment>
<comment type="similarity">
    <text evidence="1">Belongs to the universal ribosomal protein uL10 family.</text>
</comment>
<organism>
    <name type="scientific">Ralstonia nicotianae (strain ATCC BAA-1114 / GMI1000)</name>
    <name type="common">Ralstonia solanacearum</name>
    <dbReference type="NCBI Taxonomy" id="267608"/>
    <lineage>
        <taxon>Bacteria</taxon>
        <taxon>Pseudomonadati</taxon>
        <taxon>Pseudomonadota</taxon>
        <taxon>Betaproteobacteria</taxon>
        <taxon>Burkholderiales</taxon>
        <taxon>Burkholderiaceae</taxon>
        <taxon>Ralstonia</taxon>
        <taxon>Ralstonia solanacearum species complex</taxon>
    </lineage>
</organism>
<reference key="1">
    <citation type="journal article" date="2002" name="Nature">
        <title>Genome sequence of the plant pathogen Ralstonia solanacearum.</title>
        <authorList>
            <person name="Salanoubat M."/>
            <person name="Genin S."/>
            <person name="Artiguenave F."/>
            <person name="Gouzy J."/>
            <person name="Mangenot S."/>
            <person name="Arlat M."/>
            <person name="Billault A."/>
            <person name="Brottier P."/>
            <person name="Camus J.-C."/>
            <person name="Cattolico L."/>
            <person name="Chandler M."/>
            <person name="Choisne N."/>
            <person name="Claudel-Renard C."/>
            <person name="Cunnac S."/>
            <person name="Demange N."/>
            <person name="Gaspin C."/>
            <person name="Lavie M."/>
            <person name="Moisan A."/>
            <person name="Robert C."/>
            <person name="Saurin W."/>
            <person name="Schiex T."/>
            <person name="Siguier P."/>
            <person name="Thebault P."/>
            <person name="Whalen M."/>
            <person name="Wincker P."/>
            <person name="Levy M."/>
            <person name="Weissenbach J."/>
            <person name="Boucher C.A."/>
        </authorList>
    </citation>
    <scope>NUCLEOTIDE SEQUENCE [LARGE SCALE GENOMIC DNA]</scope>
    <source>
        <strain>ATCC BAA-1114 / GMI1000</strain>
    </source>
</reference>
<proteinExistence type="inferred from homology"/>
<protein>
    <recommendedName>
        <fullName evidence="1">Large ribosomal subunit protein uL10</fullName>
    </recommendedName>
    <alternativeName>
        <fullName evidence="2">50S ribosomal protein L10</fullName>
    </alternativeName>
</protein>